<keyword id="KW-0929">Antimicrobial</keyword>
<keyword id="KW-0081">Bacteriolytic enzyme</keyword>
<keyword id="KW-1015">Disulfide bond</keyword>
<keyword id="KW-0326">Glycosidase</keyword>
<keyword id="KW-0378">Hydrolase</keyword>
<keyword id="KW-1185">Reference proteome</keyword>
<keyword id="KW-0732">Signal</keyword>
<feature type="signal peptide" evidence="1">
    <location>
        <begin position="1"/>
        <end position="18"/>
    </location>
</feature>
<feature type="chain" id="PRO_0000246090" description="Lysozyme C, milk isozyme">
    <location>
        <begin position="19"/>
        <end position="148"/>
    </location>
</feature>
<feature type="domain" description="C-type lysozyme" evidence="2">
    <location>
        <begin position="19"/>
        <end position="148"/>
    </location>
</feature>
<feature type="active site" evidence="2">
    <location>
        <position position="53"/>
    </location>
</feature>
<feature type="active site" evidence="2">
    <location>
        <position position="71"/>
    </location>
</feature>
<feature type="disulfide bond" evidence="2">
    <location>
        <begin position="24"/>
        <end position="146"/>
    </location>
</feature>
<feature type="disulfide bond" evidence="2">
    <location>
        <begin position="48"/>
        <end position="134"/>
    </location>
</feature>
<feature type="disulfide bond" evidence="2">
    <location>
        <begin position="83"/>
        <end position="99"/>
    </location>
</feature>
<feature type="disulfide bond" evidence="2">
    <location>
        <begin position="95"/>
        <end position="113"/>
    </location>
</feature>
<dbReference type="EC" id="3.2.1.17"/>
<dbReference type="EMBL" id="AY684064">
    <property type="protein sequence ID" value="AAT92538.1"/>
    <property type="molecule type" value="mRNA"/>
</dbReference>
<dbReference type="EMBL" id="BC103297">
    <property type="protein sequence ID" value="AAI03298.1"/>
    <property type="molecule type" value="mRNA"/>
</dbReference>
<dbReference type="RefSeq" id="NP_001071297.1">
    <property type="nucleotide sequence ID" value="NM_001077829.1"/>
</dbReference>
<dbReference type="SMR" id="Q6B411"/>
<dbReference type="FunCoup" id="Q6B411">
    <property type="interactions" value="106"/>
</dbReference>
<dbReference type="STRING" id="9913.ENSBTAP00000015846"/>
<dbReference type="CAZy" id="GH22">
    <property type="family name" value="Glycoside Hydrolase Family 22"/>
</dbReference>
<dbReference type="PaxDb" id="9913-ENSBTAP00000015846"/>
<dbReference type="GeneID" id="281287"/>
<dbReference type="KEGG" id="bta:281287"/>
<dbReference type="VEuPathDB" id="HostDB:ENSBTAG00000011941"/>
<dbReference type="eggNOG" id="ENOG502S1S1">
    <property type="taxonomic scope" value="Eukaryota"/>
</dbReference>
<dbReference type="HOGENOM" id="CLU_111620_0_1_1"/>
<dbReference type="InParanoid" id="Q6B411"/>
<dbReference type="OMA" id="GCHIMCE"/>
<dbReference type="OrthoDB" id="17373at2759"/>
<dbReference type="TreeFam" id="TF324882"/>
<dbReference type="Proteomes" id="UP000009136">
    <property type="component" value="Chromosome 5"/>
</dbReference>
<dbReference type="Bgee" id="ENSBTAG00000011941">
    <property type="expression patterns" value="Expressed in rumen papilla and 71 other cell types or tissues"/>
</dbReference>
<dbReference type="GO" id="GO:0003796">
    <property type="term" value="F:lysozyme activity"/>
    <property type="evidence" value="ECO:0000318"/>
    <property type="project" value="GO_Central"/>
</dbReference>
<dbReference type="GO" id="GO:0050829">
    <property type="term" value="P:defense response to Gram-negative bacterium"/>
    <property type="evidence" value="ECO:0000318"/>
    <property type="project" value="GO_Central"/>
</dbReference>
<dbReference type="GO" id="GO:0050830">
    <property type="term" value="P:defense response to Gram-positive bacterium"/>
    <property type="evidence" value="ECO:0000318"/>
    <property type="project" value="GO_Central"/>
</dbReference>
<dbReference type="GO" id="GO:0031640">
    <property type="term" value="P:killing of cells of another organism"/>
    <property type="evidence" value="ECO:0007669"/>
    <property type="project" value="UniProtKB-KW"/>
</dbReference>
<dbReference type="CDD" id="cd16897">
    <property type="entry name" value="LYZ_C"/>
    <property type="match status" value="1"/>
</dbReference>
<dbReference type="FunFam" id="1.10.530.10:FF:000001">
    <property type="entry name" value="Lysozyme C"/>
    <property type="match status" value="1"/>
</dbReference>
<dbReference type="Gene3D" id="1.10.530.10">
    <property type="match status" value="1"/>
</dbReference>
<dbReference type="InterPro" id="IPR001916">
    <property type="entry name" value="Glyco_hydro_22"/>
</dbReference>
<dbReference type="InterPro" id="IPR019799">
    <property type="entry name" value="Glyco_hydro_22_CS"/>
</dbReference>
<dbReference type="InterPro" id="IPR000974">
    <property type="entry name" value="Glyco_hydro_22_lys"/>
</dbReference>
<dbReference type="InterPro" id="IPR023346">
    <property type="entry name" value="Lysozyme-like_dom_sf"/>
</dbReference>
<dbReference type="PANTHER" id="PTHR11407">
    <property type="entry name" value="LYSOZYME C"/>
    <property type="match status" value="1"/>
</dbReference>
<dbReference type="PANTHER" id="PTHR11407:SF28">
    <property type="entry name" value="LYSOZYME C"/>
    <property type="match status" value="1"/>
</dbReference>
<dbReference type="Pfam" id="PF00062">
    <property type="entry name" value="Lys"/>
    <property type="match status" value="1"/>
</dbReference>
<dbReference type="PRINTS" id="PR00137">
    <property type="entry name" value="LYSOZYME"/>
</dbReference>
<dbReference type="PRINTS" id="PR00135">
    <property type="entry name" value="LYZLACT"/>
</dbReference>
<dbReference type="SMART" id="SM00263">
    <property type="entry name" value="LYZ1"/>
    <property type="match status" value="1"/>
</dbReference>
<dbReference type="SUPFAM" id="SSF53955">
    <property type="entry name" value="Lysozyme-like"/>
    <property type="match status" value="1"/>
</dbReference>
<dbReference type="PROSITE" id="PS00128">
    <property type="entry name" value="GLYCOSYL_HYDROL_F22_1"/>
    <property type="match status" value="1"/>
</dbReference>
<dbReference type="PROSITE" id="PS51348">
    <property type="entry name" value="GLYCOSYL_HYDROL_F22_2"/>
    <property type="match status" value="1"/>
</dbReference>
<sequence>MKALLIVGLLLLSVAVQGKKFQRCELARTLKKLGLDGYRGVSLANWVCLARWESNYNTRATNYNRGDKSTDYGIFQINSRWWCNDGKTPKAVNACRIPCSALLKDDITQAVACAKRVVRDPQGIKAWVAWRNKCQNRDLRSYVQGCRV</sequence>
<protein>
    <recommendedName>
        <fullName>Lysozyme C, milk isozyme</fullName>
        <ecNumber>3.2.1.17</ecNumber>
    </recommendedName>
    <alternativeName>
        <fullName>1,4-beta-N-acetylmuramidase C</fullName>
    </alternativeName>
</protein>
<evidence type="ECO:0000255" key="1"/>
<evidence type="ECO:0000255" key="2">
    <source>
        <dbReference type="PROSITE-ProRule" id="PRU00680"/>
    </source>
</evidence>
<accession>Q6B411</accession>
<name>LYSM_BOVIN</name>
<proteinExistence type="evidence at transcript level"/>
<organism>
    <name type="scientific">Bos taurus</name>
    <name type="common">Bovine</name>
    <dbReference type="NCBI Taxonomy" id="9913"/>
    <lineage>
        <taxon>Eukaryota</taxon>
        <taxon>Metazoa</taxon>
        <taxon>Chordata</taxon>
        <taxon>Craniata</taxon>
        <taxon>Vertebrata</taxon>
        <taxon>Euteleostomi</taxon>
        <taxon>Mammalia</taxon>
        <taxon>Eutheria</taxon>
        <taxon>Laurasiatheria</taxon>
        <taxon>Artiodactyla</taxon>
        <taxon>Ruminantia</taxon>
        <taxon>Pecora</taxon>
        <taxon>Bovidae</taxon>
        <taxon>Bovinae</taxon>
        <taxon>Bos</taxon>
    </lineage>
</organism>
<comment type="function">
    <text>Lysozymes have primarily a bacteriolytic function; those in tissues and body fluids are associated with the monocyte-macrophage system and enhance the activity of immunoagents.</text>
</comment>
<comment type="catalytic activity">
    <reaction>
        <text>Hydrolysis of (1-&gt;4)-beta-linkages between N-acetylmuramic acid and N-acetyl-D-glucosamine residues in a peptidoglycan and between N-acetyl-D-glucosamine residues in chitodextrins.</text>
        <dbReference type="EC" id="3.2.1.17"/>
    </reaction>
</comment>
<comment type="similarity">
    <text evidence="2">Belongs to the glycosyl hydrolase 22 family.</text>
</comment>
<reference key="1">
    <citation type="journal article" date="2004" name="Genome">
        <title>Evolution of cow nonstomach lysozyme genes.</title>
        <authorList>
            <person name="Irwin D.M."/>
        </authorList>
    </citation>
    <scope>NUCLEOTIDE SEQUENCE [MRNA]</scope>
</reference>
<reference key="2">
    <citation type="submission" date="2005-08" db="EMBL/GenBank/DDBJ databases">
        <authorList>
            <consortium name="NIH - Mammalian Gene Collection (MGC) project"/>
        </authorList>
    </citation>
    <scope>NUCLEOTIDE SEQUENCE [LARGE SCALE MRNA]</scope>
    <source>
        <strain>Hereford</strain>
        <tissue>Ascending colon</tissue>
    </source>
</reference>